<gene>
    <name evidence="1" type="primary">hemL</name>
    <name type="ordered locus">CbuG_0257</name>
</gene>
<comment type="catalytic activity">
    <reaction evidence="1">
        <text>(S)-4-amino-5-oxopentanoate = 5-aminolevulinate</text>
        <dbReference type="Rhea" id="RHEA:14265"/>
        <dbReference type="ChEBI" id="CHEBI:57501"/>
        <dbReference type="ChEBI" id="CHEBI:356416"/>
        <dbReference type="EC" id="5.4.3.8"/>
    </reaction>
</comment>
<comment type="cofactor">
    <cofactor evidence="1">
        <name>pyridoxal 5'-phosphate</name>
        <dbReference type="ChEBI" id="CHEBI:597326"/>
    </cofactor>
</comment>
<comment type="pathway">
    <text evidence="1">Porphyrin-containing compound metabolism; protoporphyrin-IX biosynthesis; 5-aminolevulinate from L-glutamyl-tRNA(Glu): step 2/2.</text>
</comment>
<comment type="subunit">
    <text evidence="1">Homodimer.</text>
</comment>
<comment type="subcellular location">
    <subcellularLocation>
        <location evidence="1">Cytoplasm</location>
    </subcellularLocation>
</comment>
<comment type="similarity">
    <text evidence="1">Belongs to the class-III pyridoxal-phosphate-dependent aminotransferase family. HemL subfamily.</text>
</comment>
<feature type="chain" id="PRO_1000121873" description="Glutamate-1-semialdehyde 2,1-aminomutase">
    <location>
        <begin position="1"/>
        <end position="435"/>
    </location>
</feature>
<feature type="modified residue" description="N6-(pyridoxal phosphate)lysine" evidence="1">
    <location>
        <position position="266"/>
    </location>
</feature>
<protein>
    <recommendedName>
        <fullName evidence="1">Glutamate-1-semialdehyde 2,1-aminomutase</fullName>
        <shortName evidence="1">GSA</shortName>
        <ecNumber evidence="1">5.4.3.8</ecNumber>
    </recommendedName>
    <alternativeName>
        <fullName evidence="1">Glutamate-1-semialdehyde aminotransferase</fullName>
        <shortName evidence="1">GSA-AT</shortName>
    </alternativeName>
</protein>
<evidence type="ECO:0000255" key="1">
    <source>
        <dbReference type="HAMAP-Rule" id="MF_00375"/>
    </source>
</evidence>
<sequence>MVDHSAALFNKAQNYMPGGVNSPVRAFGAVGGVPRFIKKASGPYLIDVDEKKYIDYVGSWGPMILGHAHPAVIQAAQEAVQNGLSFGAPCENEIKLAALIGEFMPSIEKVRMVNSGTEATMSALRLARGVTGRSKIIKFEGCYHGHADCLLVNAGSGALTFGMPSSPGVPLGTVQDTLTATFNDLDSVAALFEKYSKDIAAIIVEPIAGNMNLIPAAPDFLTGLRELCNQYGSLLIFDEVITGFRVAKGGAQSLYNIRPDLTALGKIIGGGMPVGAYGGRREIMNQLSPEGPVYQAGTLSGNPVAMAAGLATLKELTAENFYSNLKEKTERLVMGILSRAKAAKIPLTANFSCGIFGLIFTSEGRVTRYAQAVNGNVEHFRSFFHKMLDNGVYLAPSAFESGFISAAHTNKEVDKTLDIIENIFSVSETYLRISV</sequence>
<reference key="1">
    <citation type="journal article" date="2009" name="Infect. Immun.">
        <title>Comparative genomics reveal extensive transposon-mediated genomic plasticity and diversity among potential effector proteins within the genus Coxiella.</title>
        <authorList>
            <person name="Beare P.A."/>
            <person name="Unsworth N."/>
            <person name="Andoh M."/>
            <person name="Voth D.E."/>
            <person name="Omsland A."/>
            <person name="Gilk S.D."/>
            <person name="Williams K.P."/>
            <person name="Sobral B.W."/>
            <person name="Kupko J.J. III"/>
            <person name="Porcella S.F."/>
            <person name="Samuel J.E."/>
            <person name="Heinzen R.A."/>
        </authorList>
    </citation>
    <scope>NUCLEOTIDE SEQUENCE [LARGE SCALE GENOMIC DNA]</scope>
    <source>
        <strain>CbuG_Q212</strain>
    </source>
</reference>
<proteinExistence type="inferred from homology"/>
<accession>B6J3H2</accession>
<dbReference type="EC" id="5.4.3.8" evidence="1"/>
<dbReference type="EMBL" id="CP001019">
    <property type="protein sequence ID" value="ACJ17698.1"/>
    <property type="molecule type" value="Genomic_DNA"/>
</dbReference>
<dbReference type="RefSeq" id="WP_012569676.1">
    <property type="nucleotide sequence ID" value="NC_011527.1"/>
</dbReference>
<dbReference type="SMR" id="B6J3H2"/>
<dbReference type="KEGG" id="cbg:CbuG_0257"/>
<dbReference type="HOGENOM" id="CLU_016922_1_5_6"/>
<dbReference type="UniPathway" id="UPA00251">
    <property type="reaction ID" value="UER00317"/>
</dbReference>
<dbReference type="GO" id="GO:0005737">
    <property type="term" value="C:cytoplasm"/>
    <property type="evidence" value="ECO:0007669"/>
    <property type="project" value="UniProtKB-SubCell"/>
</dbReference>
<dbReference type="GO" id="GO:0042286">
    <property type="term" value="F:glutamate-1-semialdehyde 2,1-aminomutase activity"/>
    <property type="evidence" value="ECO:0007669"/>
    <property type="project" value="UniProtKB-UniRule"/>
</dbReference>
<dbReference type="GO" id="GO:0030170">
    <property type="term" value="F:pyridoxal phosphate binding"/>
    <property type="evidence" value="ECO:0007669"/>
    <property type="project" value="InterPro"/>
</dbReference>
<dbReference type="GO" id="GO:0008483">
    <property type="term" value="F:transaminase activity"/>
    <property type="evidence" value="ECO:0007669"/>
    <property type="project" value="InterPro"/>
</dbReference>
<dbReference type="GO" id="GO:0006782">
    <property type="term" value="P:protoporphyrinogen IX biosynthetic process"/>
    <property type="evidence" value="ECO:0007669"/>
    <property type="project" value="UniProtKB-UniRule"/>
</dbReference>
<dbReference type="CDD" id="cd00610">
    <property type="entry name" value="OAT_like"/>
    <property type="match status" value="1"/>
</dbReference>
<dbReference type="FunFam" id="3.40.640.10:FF:000021">
    <property type="entry name" value="Glutamate-1-semialdehyde 2,1-aminomutase"/>
    <property type="match status" value="1"/>
</dbReference>
<dbReference type="Gene3D" id="3.90.1150.10">
    <property type="entry name" value="Aspartate Aminotransferase, domain 1"/>
    <property type="match status" value="1"/>
</dbReference>
<dbReference type="Gene3D" id="3.40.640.10">
    <property type="entry name" value="Type I PLP-dependent aspartate aminotransferase-like (Major domain)"/>
    <property type="match status" value="1"/>
</dbReference>
<dbReference type="HAMAP" id="MF_00375">
    <property type="entry name" value="HemL_aminotrans_3"/>
    <property type="match status" value="1"/>
</dbReference>
<dbReference type="InterPro" id="IPR004639">
    <property type="entry name" value="4pyrrol_synth_GluAld_NH2Trfase"/>
</dbReference>
<dbReference type="InterPro" id="IPR005814">
    <property type="entry name" value="Aminotrans_3"/>
</dbReference>
<dbReference type="InterPro" id="IPR049704">
    <property type="entry name" value="Aminotrans_3_PPA_site"/>
</dbReference>
<dbReference type="InterPro" id="IPR015424">
    <property type="entry name" value="PyrdxlP-dep_Trfase"/>
</dbReference>
<dbReference type="InterPro" id="IPR015421">
    <property type="entry name" value="PyrdxlP-dep_Trfase_major"/>
</dbReference>
<dbReference type="InterPro" id="IPR015422">
    <property type="entry name" value="PyrdxlP-dep_Trfase_small"/>
</dbReference>
<dbReference type="NCBIfam" id="TIGR00713">
    <property type="entry name" value="hemL"/>
    <property type="match status" value="1"/>
</dbReference>
<dbReference type="NCBIfam" id="NF000818">
    <property type="entry name" value="PRK00062.1"/>
    <property type="match status" value="1"/>
</dbReference>
<dbReference type="PANTHER" id="PTHR43713">
    <property type="entry name" value="GLUTAMATE-1-SEMIALDEHYDE 2,1-AMINOMUTASE"/>
    <property type="match status" value="1"/>
</dbReference>
<dbReference type="PANTHER" id="PTHR43713:SF3">
    <property type="entry name" value="GLUTAMATE-1-SEMIALDEHYDE 2,1-AMINOMUTASE 1, CHLOROPLASTIC-RELATED"/>
    <property type="match status" value="1"/>
</dbReference>
<dbReference type="Pfam" id="PF00202">
    <property type="entry name" value="Aminotran_3"/>
    <property type="match status" value="1"/>
</dbReference>
<dbReference type="SUPFAM" id="SSF53383">
    <property type="entry name" value="PLP-dependent transferases"/>
    <property type="match status" value="1"/>
</dbReference>
<dbReference type="PROSITE" id="PS00600">
    <property type="entry name" value="AA_TRANSFER_CLASS_3"/>
    <property type="match status" value="1"/>
</dbReference>
<organism>
    <name type="scientific">Coxiella burnetii (strain CbuG_Q212)</name>
    <name type="common">Coxiella burnetii (strain Q212)</name>
    <dbReference type="NCBI Taxonomy" id="434923"/>
    <lineage>
        <taxon>Bacteria</taxon>
        <taxon>Pseudomonadati</taxon>
        <taxon>Pseudomonadota</taxon>
        <taxon>Gammaproteobacteria</taxon>
        <taxon>Legionellales</taxon>
        <taxon>Coxiellaceae</taxon>
        <taxon>Coxiella</taxon>
    </lineage>
</organism>
<keyword id="KW-0963">Cytoplasm</keyword>
<keyword id="KW-0413">Isomerase</keyword>
<keyword id="KW-0627">Porphyrin biosynthesis</keyword>
<keyword id="KW-0663">Pyridoxal phosphate</keyword>
<name>GSA_COXB2</name>